<dbReference type="EC" id="2.5.1.72" evidence="1"/>
<dbReference type="EMBL" id="AE009442">
    <property type="protein sequence ID" value="AAO28736.1"/>
    <property type="molecule type" value="Genomic_DNA"/>
</dbReference>
<dbReference type="SMR" id="Q87D18"/>
<dbReference type="KEGG" id="xft:PD_0869"/>
<dbReference type="HOGENOM" id="CLU_047382_0_0_6"/>
<dbReference type="UniPathway" id="UPA00253">
    <property type="reaction ID" value="UER00327"/>
</dbReference>
<dbReference type="Proteomes" id="UP000002516">
    <property type="component" value="Chromosome"/>
</dbReference>
<dbReference type="GO" id="GO:0005829">
    <property type="term" value="C:cytosol"/>
    <property type="evidence" value="ECO:0007669"/>
    <property type="project" value="TreeGrafter"/>
</dbReference>
<dbReference type="GO" id="GO:0051539">
    <property type="term" value="F:4 iron, 4 sulfur cluster binding"/>
    <property type="evidence" value="ECO:0007669"/>
    <property type="project" value="UniProtKB-KW"/>
</dbReference>
<dbReference type="GO" id="GO:0046872">
    <property type="term" value="F:metal ion binding"/>
    <property type="evidence" value="ECO:0007669"/>
    <property type="project" value="UniProtKB-KW"/>
</dbReference>
<dbReference type="GO" id="GO:0008987">
    <property type="term" value="F:quinolinate synthetase A activity"/>
    <property type="evidence" value="ECO:0007669"/>
    <property type="project" value="UniProtKB-UniRule"/>
</dbReference>
<dbReference type="GO" id="GO:0034628">
    <property type="term" value="P:'de novo' NAD biosynthetic process from L-aspartate"/>
    <property type="evidence" value="ECO:0007669"/>
    <property type="project" value="TreeGrafter"/>
</dbReference>
<dbReference type="Gene3D" id="3.40.50.10800">
    <property type="entry name" value="NadA-like"/>
    <property type="match status" value="3"/>
</dbReference>
<dbReference type="HAMAP" id="MF_00568">
    <property type="entry name" value="NadA_type2"/>
    <property type="match status" value="1"/>
</dbReference>
<dbReference type="InterPro" id="IPR003473">
    <property type="entry name" value="NadA"/>
</dbReference>
<dbReference type="InterPro" id="IPR036094">
    <property type="entry name" value="NadA_sf"/>
</dbReference>
<dbReference type="InterPro" id="IPR023066">
    <property type="entry name" value="Quinolinate_synth_type2"/>
</dbReference>
<dbReference type="NCBIfam" id="TIGR00550">
    <property type="entry name" value="nadA"/>
    <property type="match status" value="1"/>
</dbReference>
<dbReference type="NCBIfam" id="NF006878">
    <property type="entry name" value="PRK09375.1-2"/>
    <property type="match status" value="1"/>
</dbReference>
<dbReference type="NCBIfam" id="NF006879">
    <property type="entry name" value="PRK09375.1-4"/>
    <property type="match status" value="1"/>
</dbReference>
<dbReference type="PANTHER" id="PTHR30573:SF0">
    <property type="entry name" value="QUINOLINATE SYNTHASE, CHLOROPLASTIC"/>
    <property type="match status" value="1"/>
</dbReference>
<dbReference type="PANTHER" id="PTHR30573">
    <property type="entry name" value="QUINOLINATE SYNTHETASE A"/>
    <property type="match status" value="1"/>
</dbReference>
<dbReference type="Pfam" id="PF02445">
    <property type="entry name" value="NadA"/>
    <property type="match status" value="1"/>
</dbReference>
<dbReference type="SUPFAM" id="SSF142754">
    <property type="entry name" value="NadA-like"/>
    <property type="match status" value="1"/>
</dbReference>
<organism>
    <name type="scientific">Xylella fastidiosa (strain Temecula1 / ATCC 700964)</name>
    <dbReference type="NCBI Taxonomy" id="183190"/>
    <lineage>
        <taxon>Bacteria</taxon>
        <taxon>Pseudomonadati</taxon>
        <taxon>Pseudomonadota</taxon>
        <taxon>Gammaproteobacteria</taxon>
        <taxon>Lysobacterales</taxon>
        <taxon>Lysobacteraceae</taxon>
        <taxon>Xylella</taxon>
    </lineage>
</organism>
<keyword id="KW-0004">4Fe-4S</keyword>
<keyword id="KW-0963">Cytoplasm</keyword>
<keyword id="KW-0408">Iron</keyword>
<keyword id="KW-0411">Iron-sulfur</keyword>
<keyword id="KW-0479">Metal-binding</keyword>
<keyword id="KW-0662">Pyridine nucleotide biosynthesis</keyword>
<keyword id="KW-1185">Reference proteome</keyword>
<keyword id="KW-0808">Transferase</keyword>
<gene>
    <name evidence="1" type="primary">nadA</name>
    <name type="ordered locus">PD_0869</name>
</gene>
<evidence type="ECO:0000255" key="1">
    <source>
        <dbReference type="HAMAP-Rule" id="MF_00568"/>
    </source>
</evidence>
<accession>Q87D18</accession>
<comment type="function">
    <text evidence="1">Catalyzes the condensation of iminoaspartate with dihydroxyacetone phosphate to form quinolinate.</text>
</comment>
<comment type="catalytic activity">
    <reaction evidence="1">
        <text>iminosuccinate + dihydroxyacetone phosphate = quinolinate + phosphate + 2 H2O + H(+)</text>
        <dbReference type="Rhea" id="RHEA:25888"/>
        <dbReference type="ChEBI" id="CHEBI:15377"/>
        <dbReference type="ChEBI" id="CHEBI:15378"/>
        <dbReference type="ChEBI" id="CHEBI:29959"/>
        <dbReference type="ChEBI" id="CHEBI:43474"/>
        <dbReference type="ChEBI" id="CHEBI:57642"/>
        <dbReference type="ChEBI" id="CHEBI:77875"/>
        <dbReference type="EC" id="2.5.1.72"/>
    </reaction>
    <physiologicalReaction direction="left-to-right" evidence="1">
        <dbReference type="Rhea" id="RHEA:25889"/>
    </physiologicalReaction>
</comment>
<comment type="cofactor">
    <cofactor evidence="1">
        <name>[4Fe-4S] cluster</name>
        <dbReference type="ChEBI" id="CHEBI:49883"/>
    </cofactor>
    <text evidence="1">Binds 1 [4Fe-4S] cluster per subunit.</text>
</comment>
<comment type="pathway">
    <text evidence="1">Cofactor biosynthesis; NAD(+) biosynthesis; quinolinate from iminoaspartate: step 1/1.</text>
</comment>
<comment type="subcellular location">
    <subcellularLocation>
        <location evidence="1">Cytoplasm</location>
    </subcellularLocation>
</comment>
<comment type="similarity">
    <text evidence="1">Belongs to the quinolinate synthase family. Type 2 subfamily.</text>
</comment>
<reference key="1">
    <citation type="journal article" date="2003" name="J. Bacteriol.">
        <title>Comparative analyses of the complete genome sequences of Pierce's disease and citrus variegated chlorosis strains of Xylella fastidiosa.</title>
        <authorList>
            <person name="Van Sluys M.A."/>
            <person name="de Oliveira M.C."/>
            <person name="Monteiro-Vitorello C.B."/>
            <person name="Miyaki C.Y."/>
            <person name="Furlan L.R."/>
            <person name="Camargo L.E.A."/>
            <person name="da Silva A.C.R."/>
            <person name="Moon D.H."/>
            <person name="Takita M.A."/>
            <person name="Lemos E.G.M."/>
            <person name="Machado M.A."/>
            <person name="Ferro M.I.T."/>
            <person name="da Silva F.R."/>
            <person name="Goldman M.H.S."/>
            <person name="Goldman G.H."/>
            <person name="Lemos M.V.F."/>
            <person name="El-Dorry H."/>
            <person name="Tsai S.M."/>
            <person name="Carrer H."/>
            <person name="Carraro D.M."/>
            <person name="de Oliveira R.C."/>
            <person name="Nunes L.R."/>
            <person name="Siqueira W.J."/>
            <person name="Coutinho L.L."/>
            <person name="Kimura E.T."/>
            <person name="Ferro E.S."/>
            <person name="Harakava R."/>
            <person name="Kuramae E.E."/>
            <person name="Marino C.L."/>
            <person name="Giglioti E."/>
            <person name="Abreu I.L."/>
            <person name="Alves L.M.C."/>
            <person name="do Amaral A.M."/>
            <person name="Baia G.S."/>
            <person name="Blanco S.R."/>
            <person name="Brito M.S."/>
            <person name="Cannavan F.S."/>
            <person name="Celestino A.V."/>
            <person name="da Cunha A.F."/>
            <person name="Fenille R.C."/>
            <person name="Ferro J.A."/>
            <person name="Formighieri E.F."/>
            <person name="Kishi L.T."/>
            <person name="Leoni S.G."/>
            <person name="Oliveira A.R."/>
            <person name="Rosa V.E. Jr."/>
            <person name="Sassaki F.T."/>
            <person name="Sena J.A.D."/>
            <person name="de Souza A.A."/>
            <person name="Truffi D."/>
            <person name="Tsukumo F."/>
            <person name="Yanai G.M."/>
            <person name="Zaros L.G."/>
            <person name="Civerolo E.L."/>
            <person name="Simpson A.J.G."/>
            <person name="Almeida N.F. Jr."/>
            <person name="Setubal J.C."/>
            <person name="Kitajima J.P."/>
        </authorList>
    </citation>
    <scope>NUCLEOTIDE SEQUENCE [LARGE SCALE GENOMIC DNA]</scope>
    <source>
        <strain>Temecula1 / ATCC 700964</strain>
    </source>
</reference>
<feature type="chain" id="PRO_0000155800" description="Quinolinate synthase">
    <location>
        <begin position="1"/>
        <end position="339"/>
    </location>
</feature>
<feature type="binding site" evidence="1">
    <location>
        <position position="63"/>
    </location>
    <ligand>
        <name>iminosuccinate</name>
        <dbReference type="ChEBI" id="CHEBI:77875"/>
    </ligand>
</feature>
<feature type="binding site" evidence="1">
    <location>
        <position position="81"/>
    </location>
    <ligand>
        <name>iminosuccinate</name>
        <dbReference type="ChEBI" id="CHEBI:77875"/>
    </ligand>
</feature>
<feature type="binding site" evidence="1">
    <location>
        <position position="126"/>
    </location>
    <ligand>
        <name>[4Fe-4S] cluster</name>
        <dbReference type="ChEBI" id="CHEBI:49883"/>
    </ligand>
</feature>
<feature type="binding site" evidence="1">
    <location>
        <begin position="152"/>
        <end position="154"/>
    </location>
    <ligand>
        <name>iminosuccinate</name>
        <dbReference type="ChEBI" id="CHEBI:77875"/>
    </ligand>
</feature>
<feature type="binding site" evidence="1">
    <location>
        <position position="169"/>
    </location>
    <ligand>
        <name>iminosuccinate</name>
        <dbReference type="ChEBI" id="CHEBI:77875"/>
    </ligand>
</feature>
<feature type="binding site" evidence="1">
    <location>
        <position position="211"/>
    </location>
    <ligand>
        <name>[4Fe-4S] cluster</name>
        <dbReference type="ChEBI" id="CHEBI:49883"/>
    </ligand>
</feature>
<feature type="binding site" evidence="1">
    <location>
        <begin position="237"/>
        <end position="239"/>
    </location>
    <ligand>
        <name>iminosuccinate</name>
        <dbReference type="ChEBI" id="CHEBI:77875"/>
    </ligand>
</feature>
<feature type="binding site" evidence="1">
    <location>
        <position position="254"/>
    </location>
    <ligand>
        <name>iminosuccinate</name>
        <dbReference type="ChEBI" id="CHEBI:77875"/>
    </ligand>
</feature>
<feature type="binding site" evidence="1">
    <location>
        <position position="297"/>
    </location>
    <ligand>
        <name>[4Fe-4S] cluster</name>
        <dbReference type="ChEBI" id="CHEBI:49883"/>
    </ligand>
</feature>
<sequence length="339" mass="36958">MEEAHNMREISIREIVVNHAVLSSCIDKCGDCFASEAARIKFDNDIEAIFELKRKRNAVILAHNYQTPEIFHGVADIVGDSLALARKAIDVDADVIVLAGVHFMAETAKLLNPEKTVLIPDREAGCSLAESITPEDVALLRQAHPGIPIVTYVNTSAAVKAASDICCTSGNAKKVVEALGVPKVLMIPDEYLARNVAKETEVQIISWHGHCEVHELFSASDILQLRENHPGVTVLAHPECPPDVVAAADFAGSTAAMSDYVTTKQPKRVVLLTECSMSDNIAVHHPDVEFISSCNLCPHMKRITLANIRTALEENRHEVTVDAKIADPARRAVERMLAI</sequence>
<name>NADA_XYLFT</name>
<protein>
    <recommendedName>
        <fullName evidence="1">Quinolinate synthase</fullName>
        <ecNumber evidence="1">2.5.1.72</ecNumber>
    </recommendedName>
</protein>
<proteinExistence type="inferred from homology"/>